<accession>O08764</accession>
<protein>
    <recommendedName>
        <fullName>Ankyrin repeat and BTB/POZ domain-containing protein 2</fullName>
    </recommendedName>
    <alternativeName>
        <fullName>CCA3</fullName>
    </alternativeName>
    <alternativeName>
        <fullName>Confluent 3Y1 cell-associated protein</fullName>
    </alternativeName>
</protein>
<proteinExistence type="evidence at transcript level"/>
<keyword id="KW-0040">ANK repeat</keyword>
<keyword id="KW-1185">Reference proteome</keyword>
<keyword id="KW-0677">Repeat</keyword>
<feature type="chain" id="PRO_0000066889" description="Ankyrin repeat and BTB/POZ domain-containing protein 2">
    <location>
        <begin position="1"/>
        <end position="1009"/>
    </location>
</feature>
<feature type="repeat" description="ANK 1">
    <location>
        <begin position="520"/>
        <end position="549"/>
    </location>
</feature>
<feature type="repeat" description="ANK 2">
    <location>
        <begin position="566"/>
        <end position="595"/>
    </location>
</feature>
<feature type="repeat" description="ANK 3">
    <location>
        <begin position="605"/>
        <end position="634"/>
    </location>
</feature>
<feature type="repeat" description="ANK 4">
    <location>
        <begin position="648"/>
        <end position="677"/>
    </location>
</feature>
<feature type="domain" description="BTB" evidence="1">
    <location>
        <begin position="843"/>
        <end position="912"/>
    </location>
</feature>
<sequence>MAGTYSSTLKTLEDLTLDSGYGAGDSCRSLSLSSSKSNSQALNSSAPQHRGAAWWCYSGSMNSRHNSWDTVNTVLPEDPEVADLFSRCPRLPELEEFPWTEGDVARVLRKSVGGRRLPSFSAEAVRRLAGLLRRALIRVAREAQRLSVLHAKCTRFEVQSAVRLVHSWALAESCALAAVKALSLYSMSAGDGLRRGKSARCGLTFSVGRFFRWMVDTRISVRIHEYAAISLTACMENLVEEIRARVLASQSPDGGGAGGGEVSAEALEMVINNDAELWGVLQPYEHLICGKNANGVLSLPAYFSPYNGGSLGHDERADAYAQLELRTLEQSLLATCVGSISELSDLVSRAMHHMQGRHPLCPGTSPARQARQPPQPITWSPDALHTLYYFLRCPQMESMENPNLDPPRMTLNNERPFMLLPPLMEWMRVAITYAEHRRSLTVDSGDIRQAARLLLPGLDCEPRQLKPECCFSSFRRLDARAATERFNQDLGFRMLNCGRTDLISQPSSPGPDGVNTMDDQGLTPLMYACATGDEAMVQMLIDAGANLDIQVPSNSPRHPSVHPDSRHWTSLTFAVLHGHISVVQLLLDAGAHVEGSAVNSGEDSYAETPLQLASAAGNYELVSLLLSRGADPLLSMLEANGMASSLHEDMNCFSHSAAHGHRNVLRKLLTQPQQAKADVLSLEEILAEGVEESDTSSQGSSEGPVRLSRTRTKALQEAMYYSAEHGYVDITMELRALGVPWKLHIWIESLRTSFSQSRYSVVQGLLRDFSSIKEEEYNEELVTEGLQLMFDILKTSKNDSVLQQLATIFTHCYGTSPIPSIPEIRKTLPARLDPHFLNNKEMSDVTFLVEGKLFYAHKVLLVTASNRFKTLMTNKSEQDGDNSKTIEISDIKYHIFQMLMQYLYYGGTESMEIPTADILQLLSAANLFQLDALQRHCEILCSQTLSVESAVNTYKYAKIHNAPELALFCEGFFLKHMKALLEQMPSGSSSMAEAAKSRAWTHCRICRAP</sequence>
<organism>
    <name type="scientific">Rattus norvegicus</name>
    <name type="common">Rat</name>
    <dbReference type="NCBI Taxonomy" id="10116"/>
    <lineage>
        <taxon>Eukaryota</taxon>
        <taxon>Metazoa</taxon>
        <taxon>Chordata</taxon>
        <taxon>Craniata</taxon>
        <taxon>Vertebrata</taxon>
        <taxon>Euteleostomi</taxon>
        <taxon>Mammalia</taxon>
        <taxon>Eutheria</taxon>
        <taxon>Euarchontoglires</taxon>
        <taxon>Glires</taxon>
        <taxon>Rodentia</taxon>
        <taxon>Myomorpha</taxon>
        <taxon>Muroidea</taxon>
        <taxon>Muridae</taxon>
        <taxon>Murinae</taxon>
        <taxon>Rattus</taxon>
    </lineage>
</organism>
<name>ABTB2_RAT</name>
<gene>
    <name type="primary">Abtb2</name>
    <name type="synonym">Cca3</name>
</gene>
<comment type="function">
    <text>May be involved in the initiation of hepatocyte growth.</text>
</comment>
<comment type="tissue specificity">
    <text evidence="2">Highly expressed in liver, brain and testis with lower expression in the spleen.</text>
</comment>
<evidence type="ECO:0000255" key="1">
    <source>
        <dbReference type="PROSITE-ProRule" id="PRU00037"/>
    </source>
</evidence>
<evidence type="ECO:0000269" key="2">
    <source>
    </source>
</evidence>
<dbReference type="EMBL" id="AB000216">
    <property type="protein sequence ID" value="BAA19969.1"/>
    <property type="molecule type" value="mRNA"/>
</dbReference>
<dbReference type="PIR" id="T31081">
    <property type="entry name" value="T31081"/>
</dbReference>
<dbReference type="RefSeq" id="NP_599230.2">
    <property type="nucleotide sequence ID" value="NM_134403.2"/>
</dbReference>
<dbReference type="SMR" id="O08764"/>
<dbReference type="FunCoup" id="O08764">
    <property type="interactions" value="327"/>
</dbReference>
<dbReference type="STRING" id="10116.ENSRNOP00000069124"/>
<dbReference type="PhosphoSitePlus" id="O08764"/>
<dbReference type="PaxDb" id="10116-ENSRNOP00000038218"/>
<dbReference type="GeneID" id="171440"/>
<dbReference type="KEGG" id="rno:171440"/>
<dbReference type="UCSC" id="RGD:620724">
    <property type="organism name" value="rat"/>
</dbReference>
<dbReference type="AGR" id="RGD:620724"/>
<dbReference type="CTD" id="25841"/>
<dbReference type="RGD" id="620724">
    <property type="gene designation" value="Abtb2"/>
</dbReference>
<dbReference type="eggNOG" id="ENOG502QSQY">
    <property type="taxonomic scope" value="Eukaryota"/>
</dbReference>
<dbReference type="InParanoid" id="O08764"/>
<dbReference type="OrthoDB" id="2316821at2759"/>
<dbReference type="PhylomeDB" id="O08764"/>
<dbReference type="PRO" id="PR:O08764"/>
<dbReference type="Proteomes" id="UP000002494">
    <property type="component" value="Unplaced"/>
</dbReference>
<dbReference type="GO" id="GO:0046982">
    <property type="term" value="F:protein heterodimerization activity"/>
    <property type="evidence" value="ECO:0007669"/>
    <property type="project" value="InterPro"/>
</dbReference>
<dbReference type="GO" id="GO:0097237">
    <property type="term" value="P:cellular response to toxic substance"/>
    <property type="evidence" value="ECO:0000266"/>
    <property type="project" value="RGD"/>
</dbReference>
<dbReference type="CDD" id="cd18350">
    <property type="entry name" value="BTB_POZ_ABTB2_BPOZ2"/>
    <property type="match status" value="1"/>
</dbReference>
<dbReference type="CDD" id="cd22913">
    <property type="entry name" value="HFD_ABTB2-like"/>
    <property type="match status" value="1"/>
</dbReference>
<dbReference type="FunFam" id="1.25.40.20:FF:000045">
    <property type="entry name" value="Ankyrin repeat and BTB/POZ domain-containing protein 2"/>
    <property type="match status" value="1"/>
</dbReference>
<dbReference type="FunFam" id="1.10.20.10:FF:000057">
    <property type="entry name" value="ankyrin repeat and BTB/POZ domain-containing protein 2"/>
    <property type="match status" value="1"/>
</dbReference>
<dbReference type="FunFam" id="3.30.710.10:FF:000030">
    <property type="entry name" value="Ankyrin repeat and BTB/POZ domain-containing protein BTBD11"/>
    <property type="match status" value="1"/>
</dbReference>
<dbReference type="Gene3D" id="1.25.40.20">
    <property type="entry name" value="Ankyrin repeat-containing domain"/>
    <property type="match status" value="1"/>
</dbReference>
<dbReference type="Gene3D" id="1.10.20.10">
    <property type="entry name" value="Histone, subunit A"/>
    <property type="match status" value="1"/>
</dbReference>
<dbReference type="Gene3D" id="3.30.710.10">
    <property type="entry name" value="Potassium Channel Kv1.1, Chain A"/>
    <property type="match status" value="1"/>
</dbReference>
<dbReference type="InterPro" id="IPR048063">
    <property type="entry name" value="ABTB2_BTB_POZ"/>
</dbReference>
<dbReference type="InterPro" id="IPR052089">
    <property type="entry name" value="Ankyrin-BTB/POZ_domain"/>
</dbReference>
<dbReference type="InterPro" id="IPR002110">
    <property type="entry name" value="Ankyrin_rpt"/>
</dbReference>
<dbReference type="InterPro" id="IPR036770">
    <property type="entry name" value="Ankyrin_rpt-contain_sf"/>
</dbReference>
<dbReference type="InterPro" id="IPR000210">
    <property type="entry name" value="BTB/POZ_dom"/>
</dbReference>
<dbReference type="InterPro" id="IPR009072">
    <property type="entry name" value="Histone-fold"/>
</dbReference>
<dbReference type="InterPro" id="IPR011333">
    <property type="entry name" value="SKP1/BTB/POZ_sf"/>
</dbReference>
<dbReference type="PANTHER" id="PTHR46071">
    <property type="entry name" value="ANKYRIN REPEAT AND BTB/POZ DOMAIN-CONTAINING"/>
    <property type="match status" value="1"/>
</dbReference>
<dbReference type="PANTHER" id="PTHR46071:SF3">
    <property type="entry name" value="ANKYRIN REPEAT AND BTB_POZ DOMAIN-CONTAINING PROTEIN 2"/>
    <property type="match status" value="1"/>
</dbReference>
<dbReference type="Pfam" id="PF00023">
    <property type="entry name" value="Ank"/>
    <property type="match status" value="1"/>
</dbReference>
<dbReference type="Pfam" id="PF12796">
    <property type="entry name" value="Ank_2"/>
    <property type="match status" value="1"/>
</dbReference>
<dbReference type="Pfam" id="PF00651">
    <property type="entry name" value="BTB"/>
    <property type="match status" value="1"/>
</dbReference>
<dbReference type="SMART" id="SM00248">
    <property type="entry name" value="ANK"/>
    <property type="match status" value="5"/>
</dbReference>
<dbReference type="SMART" id="SM00225">
    <property type="entry name" value="BTB"/>
    <property type="match status" value="1"/>
</dbReference>
<dbReference type="SUPFAM" id="SSF48403">
    <property type="entry name" value="Ankyrin repeat"/>
    <property type="match status" value="1"/>
</dbReference>
<dbReference type="SUPFAM" id="SSF47113">
    <property type="entry name" value="Histone-fold"/>
    <property type="match status" value="2"/>
</dbReference>
<dbReference type="SUPFAM" id="SSF54695">
    <property type="entry name" value="POZ domain"/>
    <property type="match status" value="1"/>
</dbReference>
<dbReference type="PROSITE" id="PS50297">
    <property type="entry name" value="ANK_REP_REGION"/>
    <property type="match status" value="1"/>
</dbReference>
<dbReference type="PROSITE" id="PS50088">
    <property type="entry name" value="ANK_REPEAT"/>
    <property type="match status" value="3"/>
</dbReference>
<dbReference type="PROSITE" id="PS50097">
    <property type="entry name" value="BTB"/>
    <property type="match status" value="1"/>
</dbReference>
<reference key="1">
    <citation type="journal article" date="1997" name="FEBS Lett.">
        <title>Cca3, the mRNA level of which transiently decreases before initiation of DNA synthesis in regenerating rat liver cells.</title>
        <authorList>
            <person name="Hayashi Y."/>
            <person name="Ichinose M."/>
            <person name="Yuasa H."/>
            <person name="Tatematsu M."/>
            <person name="Ishibashi M."/>
        </authorList>
    </citation>
    <scope>NUCLEOTIDE SEQUENCE [MRNA]</scope>
    <scope>TISSUE SPECIFICITY</scope>
    <source>
        <tissue>Fibroblast</tissue>
    </source>
</reference>